<reference key="1">
    <citation type="journal article" date="2006" name="Nat. Biotechnol.">
        <title>The genome and transcriptomes of the anti-tumor agent Clostridium novyi-NT.</title>
        <authorList>
            <person name="Bettegowda C."/>
            <person name="Huang X."/>
            <person name="Lin J."/>
            <person name="Cheong I."/>
            <person name="Kohli M."/>
            <person name="Szabo S.A."/>
            <person name="Zhang X."/>
            <person name="Diaz L.A. Jr."/>
            <person name="Velculescu V.E."/>
            <person name="Parmigiani G."/>
            <person name="Kinzler K.W."/>
            <person name="Vogelstein B."/>
            <person name="Zhou S."/>
        </authorList>
    </citation>
    <scope>NUCLEOTIDE SEQUENCE [LARGE SCALE GENOMIC DNA]</scope>
    <source>
        <strain>NT</strain>
    </source>
</reference>
<protein>
    <recommendedName>
        <fullName evidence="1">N-acetyl-gamma-glutamyl-phosphate reductase</fullName>
        <shortName evidence="1">AGPR</shortName>
        <ecNumber evidence="1">1.2.1.38</ecNumber>
    </recommendedName>
    <alternativeName>
        <fullName evidence="1">N-acetyl-glutamate semialdehyde dehydrogenase</fullName>
        <shortName evidence="1">NAGSA dehydrogenase</shortName>
    </alternativeName>
</protein>
<accession>A0Q1F0</accession>
<comment type="function">
    <text evidence="1">Catalyzes the NADPH-dependent reduction of N-acetyl-5-glutamyl phosphate to yield N-acetyl-L-glutamate 5-semialdehyde.</text>
</comment>
<comment type="catalytic activity">
    <reaction evidence="1">
        <text>N-acetyl-L-glutamate 5-semialdehyde + phosphate + NADP(+) = N-acetyl-L-glutamyl 5-phosphate + NADPH + H(+)</text>
        <dbReference type="Rhea" id="RHEA:21588"/>
        <dbReference type="ChEBI" id="CHEBI:15378"/>
        <dbReference type="ChEBI" id="CHEBI:29123"/>
        <dbReference type="ChEBI" id="CHEBI:43474"/>
        <dbReference type="ChEBI" id="CHEBI:57783"/>
        <dbReference type="ChEBI" id="CHEBI:57936"/>
        <dbReference type="ChEBI" id="CHEBI:58349"/>
        <dbReference type="EC" id="1.2.1.38"/>
    </reaction>
</comment>
<comment type="pathway">
    <text evidence="1">Amino-acid biosynthesis; L-arginine biosynthesis; N(2)-acetyl-L-ornithine from L-glutamate: step 3/4.</text>
</comment>
<comment type="subcellular location">
    <subcellularLocation>
        <location evidence="1">Cytoplasm</location>
    </subcellularLocation>
</comment>
<comment type="similarity">
    <text evidence="1">Belongs to the NAGSA dehydrogenase family. Type 1 subfamily.</text>
</comment>
<organism>
    <name type="scientific">Clostridium novyi (strain NT)</name>
    <dbReference type="NCBI Taxonomy" id="386415"/>
    <lineage>
        <taxon>Bacteria</taxon>
        <taxon>Bacillati</taxon>
        <taxon>Bacillota</taxon>
        <taxon>Clostridia</taxon>
        <taxon>Eubacteriales</taxon>
        <taxon>Clostridiaceae</taxon>
        <taxon>Clostridium</taxon>
    </lineage>
</organism>
<keyword id="KW-0028">Amino-acid biosynthesis</keyword>
<keyword id="KW-0055">Arginine biosynthesis</keyword>
<keyword id="KW-0963">Cytoplasm</keyword>
<keyword id="KW-0521">NADP</keyword>
<keyword id="KW-0560">Oxidoreductase</keyword>
<keyword id="KW-1185">Reference proteome</keyword>
<proteinExistence type="inferred from homology"/>
<evidence type="ECO:0000255" key="1">
    <source>
        <dbReference type="HAMAP-Rule" id="MF_00150"/>
    </source>
</evidence>
<dbReference type="EC" id="1.2.1.38" evidence="1"/>
<dbReference type="EMBL" id="CP000382">
    <property type="protein sequence ID" value="ABK61967.1"/>
    <property type="molecule type" value="Genomic_DNA"/>
</dbReference>
<dbReference type="RefSeq" id="WP_011722446.1">
    <property type="nucleotide sequence ID" value="NC_008593.1"/>
</dbReference>
<dbReference type="SMR" id="A0Q1F0"/>
<dbReference type="STRING" id="386415.NT01CX_2379"/>
<dbReference type="KEGG" id="cno:NT01CX_2379"/>
<dbReference type="eggNOG" id="COG0002">
    <property type="taxonomic scope" value="Bacteria"/>
</dbReference>
<dbReference type="HOGENOM" id="CLU_006384_0_1_9"/>
<dbReference type="UniPathway" id="UPA00068">
    <property type="reaction ID" value="UER00108"/>
</dbReference>
<dbReference type="Proteomes" id="UP000008220">
    <property type="component" value="Chromosome"/>
</dbReference>
<dbReference type="GO" id="GO:0005737">
    <property type="term" value="C:cytoplasm"/>
    <property type="evidence" value="ECO:0007669"/>
    <property type="project" value="UniProtKB-SubCell"/>
</dbReference>
<dbReference type="GO" id="GO:0003942">
    <property type="term" value="F:N-acetyl-gamma-glutamyl-phosphate reductase activity"/>
    <property type="evidence" value="ECO:0007669"/>
    <property type="project" value="UniProtKB-UniRule"/>
</dbReference>
<dbReference type="GO" id="GO:0051287">
    <property type="term" value="F:NAD binding"/>
    <property type="evidence" value="ECO:0007669"/>
    <property type="project" value="InterPro"/>
</dbReference>
<dbReference type="GO" id="GO:0070401">
    <property type="term" value="F:NADP+ binding"/>
    <property type="evidence" value="ECO:0007669"/>
    <property type="project" value="InterPro"/>
</dbReference>
<dbReference type="GO" id="GO:0006526">
    <property type="term" value="P:L-arginine biosynthetic process"/>
    <property type="evidence" value="ECO:0007669"/>
    <property type="project" value="UniProtKB-UniRule"/>
</dbReference>
<dbReference type="CDD" id="cd23934">
    <property type="entry name" value="AGPR_1_C"/>
    <property type="match status" value="1"/>
</dbReference>
<dbReference type="CDD" id="cd17895">
    <property type="entry name" value="AGPR_1_N"/>
    <property type="match status" value="1"/>
</dbReference>
<dbReference type="FunFam" id="3.30.360.10:FF:000014">
    <property type="entry name" value="N-acetyl-gamma-glutamyl-phosphate reductase"/>
    <property type="match status" value="1"/>
</dbReference>
<dbReference type="Gene3D" id="3.30.360.10">
    <property type="entry name" value="Dihydrodipicolinate Reductase, domain 2"/>
    <property type="match status" value="1"/>
</dbReference>
<dbReference type="Gene3D" id="3.40.50.720">
    <property type="entry name" value="NAD(P)-binding Rossmann-like Domain"/>
    <property type="match status" value="1"/>
</dbReference>
<dbReference type="HAMAP" id="MF_00150">
    <property type="entry name" value="ArgC_type1"/>
    <property type="match status" value="1"/>
</dbReference>
<dbReference type="InterPro" id="IPR000706">
    <property type="entry name" value="AGPR_type-1"/>
</dbReference>
<dbReference type="InterPro" id="IPR036291">
    <property type="entry name" value="NAD(P)-bd_dom_sf"/>
</dbReference>
<dbReference type="InterPro" id="IPR050085">
    <property type="entry name" value="NAGSA_dehydrogenase"/>
</dbReference>
<dbReference type="InterPro" id="IPR000534">
    <property type="entry name" value="Semialdehyde_DH_NAD-bd"/>
</dbReference>
<dbReference type="NCBIfam" id="TIGR01850">
    <property type="entry name" value="argC"/>
    <property type="match status" value="1"/>
</dbReference>
<dbReference type="PANTHER" id="PTHR32338:SF10">
    <property type="entry name" value="N-ACETYL-GAMMA-GLUTAMYL-PHOSPHATE REDUCTASE, CHLOROPLASTIC-RELATED"/>
    <property type="match status" value="1"/>
</dbReference>
<dbReference type="PANTHER" id="PTHR32338">
    <property type="entry name" value="N-ACETYL-GAMMA-GLUTAMYL-PHOSPHATE REDUCTASE, CHLOROPLASTIC-RELATED-RELATED"/>
    <property type="match status" value="1"/>
</dbReference>
<dbReference type="Pfam" id="PF01118">
    <property type="entry name" value="Semialdhyde_dh"/>
    <property type="match status" value="1"/>
</dbReference>
<dbReference type="Pfam" id="PF22698">
    <property type="entry name" value="Semialdhyde_dhC_1"/>
    <property type="match status" value="1"/>
</dbReference>
<dbReference type="SMART" id="SM00859">
    <property type="entry name" value="Semialdhyde_dh"/>
    <property type="match status" value="1"/>
</dbReference>
<dbReference type="SUPFAM" id="SSF55347">
    <property type="entry name" value="Glyceraldehyde-3-phosphate dehydrogenase-like, C-terminal domain"/>
    <property type="match status" value="1"/>
</dbReference>
<dbReference type="SUPFAM" id="SSF51735">
    <property type="entry name" value="NAD(P)-binding Rossmann-fold domains"/>
    <property type="match status" value="1"/>
</dbReference>
<sequence length="345" mass="39158">MIKVGIIGSTGYIGQQLVWLLKIHPNVEIVFLSSYNYAGYSFNSVYNNYKGFVETTCINIKEVKTRLKDVDIVFMALPHGKSFEMVKYSLNLGIKVIDLSGDFRLKDSKEYEKWYKIEHPLKEVLKYSVYGLPELFRKDIKKASLICNPGCYATASILALAPLIKLDLVEKGSIIVDAKSGVSGAGRALKTQSLYCECNETMKAYGIGNHRHTPEIEQELSRFCKEDIKLTFTPHLVPINRGIFATCYATLKKDLNKVQLEEAYEKFYENDYFIKVMKELVEVKWIKNSNFCNMNVNIDERTNKVIVSSVIDNLMKGAASQAVQNMNILFGIDEKTGLNIPSMMI</sequence>
<feature type="chain" id="PRO_1000010989" description="N-acetyl-gamma-glutamyl-phosphate reductase">
    <location>
        <begin position="1"/>
        <end position="345"/>
    </location>
</feature>
<feature type="active site" evidence="1">
    <location>
        <position position="151"/>
    </location>
</feature>
<gene>
    <name evidence="1" type="primary">argC</name>
    <name type="ordered locus">NT01CX_2379</name>
</gene>
<name>ARGC_CLONN</name>